<reference key="1">
    <citation type="journal article" date="2006" name="Mol. Microbiol.">
        <title>Role of pathogenicity island-associated integrases in the genome plasticity of uropathogenic Escherichia coli strain 536.</title>
        <authorList>
            <person name="Hochhut B."/>
            <person name="Wilde C."/>
            <person name="Balling G."/>
            <person name="Middendorf B."/>
            <person name="Dobrindt U."/>
            <person name="Brzuszkiewicz E."/>
            <person name="Gottschalk G."/>
            <person name="Carniel E."/>
            <person name="Hacker J."/>
        </authorList>
    </citation>
    <scope>NUCLEOTIDE SEQUENCE [LARGE SCALE GENOMIC DNA]</scope>
    <source>
        <strain>536 / UPEC</strain>
    </source>
</reference>
<keyword id="KW-0067">ATP-binding</keyword>
<keyword id="KW-0436">Ligase</keyword>
<keyword id="KW-0547">Nucleotide-binding</keyword>
<name>EPMA_ECOL5</name>
<protein>
    <recommendedName>
        <fullName evidence="1">Elongation factor P--(R)-beta-lysine ligase</fullName>
        <shortName evidence="1">EF-P--(R)-beta-lysine ligase</shortName>
        <ecNumber evidence="1">6.3.2.-</ecNumber>
    </recommendedName>
    <alternativeName>
        <fullName evidence="1">EF-P post-translational modification enzyme A</fullName>
    </alternativeName>
    <alternativeName>
        <fullName evidence="1">EF-P-lysine lysyltransferase</fullName>
    </alternativeName>
</protein>
<dbReference type="EC" id="6.3.2.-" evidence="1"/>
<dbReference type="EMBL" id="CP000247">
    <property type="protein sequence ID" value="ABG72345.1"/>
    <property type="molecule type" value="Genomic_DNA"/>
</dbReference>
<dbReference type="RefSeq" id="WP_000004771.1">
    <property type="nucleotide sequence ID" value="NC_008253.1"/>
</dbReference>
<dbReference type="SMR" id="Q0T9N4"/>
<dbReference type="GeneID" id="93777667"/>
<dbReference type="KEGG" id="ecp:ECP_4401"/>
<dbReference type="HOGENOM" id="CLU_008255_1_1_6"/>
<dbReference type="Proteomes" id="UP000009182">
    <property type="component" value="Chromosome"/>
</dbReference>
<dbReference type="GO" id="GO:0005829">
    <property type="term" value="C:cytosol"/>
    <property type="evidence" value="ECO:0007669"/>
    <property type="project" value="TreeGrafter"/>
</dbReference>
<dbReference type="GO" id="GO:0016880">
    <property type="term" value="F:acid-ammonia (or amide) ligase activity"/>
    <property type="evidence" value="ECO:0007669"/>
    <property type="project" value="UniProtKB-UniRule"/>
</dbReference>
<dbReference type="GO" id="GO:0005524">
    <property type="term" value="F:ATP binding"/>
    <property type="evidence" value="ECO:0007669"/>
    <property type="project" value="UniProtKB-UniRule"/>
</dbReference>
<dbReference type="GO" id="GO:0004824">
    <property type="term" value="F:lysine-tRNA ligase activity"/>
    <property type="evidence" value="ECO:0007669"/>
    <property type="project" value="InterPro"/>
</dbReference>
<dbReference type="GO" id="GO:0000049">
    <property type="term" value="F:tRNA binding"/>
    <property type="evidence" value="ECO:0007669"/>
    <property type="project" value="TreeGrafter"/>
</dbReference>
<dbReference type="GO" id="GO:0006430">
    <property type="term" value="P:lysyl-tRNA aminoacylation"/>
    <property type="evidence" value="ECO:0007669"/>
    <property type="project" value="InterPro"/>
</dbReference>
<dbReference type="FunFam" id="3.30.930.10:FF:000017">
    <property type="entry name" value="Elongation factor P--(R)-beta-lysine ligase"/>
    <property type="match status" value="1"/>
</dbReference>
<dbReference type="Gene3D" id="3.30.930.10">
    <property type="entry name" value="Bira Bifunctional Protein, Domain 2"/>
    <property type="match status" value="1"/>
</dbReference>
<dbReference type="HAMAP" id="MF_00174">
    <property type="entry name" value="EF_P_modif_A"/>
    <property type="match status" value="1"/>
</dbReference>
<dbReference type="InterPro" id="IPR004364">
    <property type="entry name" value="Aa-tRNA-synt_II"/>
</dbReference>
<dbReference type="InterPro" id="IPR006195">
    <property type="entry name" value="aa-tRNA-synth_II"/>
</dbReference>
<dbReference type="InterPro" id="IPR045864">
    <property type="entry name" value="aa-tRNA-synth_II/BPL/LPL"/>
</dbReference>
<dbReference type="InterPro" id="IPR004525">
    <property type="entry name" value="EpmA"/>
</dbReference>
<dbReference type="InterPro" id="IPR018149">
    <property type="entry name" value="Lys-tRNA-synth_II_C"/>
</dbReference>
<dbReference type="NCBIfam" id="TIGR00462">
    <property type="entry name" value="genX"/>
    <property type="match status" value="1"/>
</dbReference>
<dbReference type="NCBIfam" id="NF006828">
    <property type="entry name" value="PRK09350.1"/>
    <property type="match status" value="1"/>
</dbReference>
<dbReference type="PANTHER" id="PTHR42918:SF6">
    <property type="entry name" value="ELONGATION FACTOR P--(R)-BETA-LYSINE LIGASE"/>
    <property type="match status" value="1"/>
</dbReference>
<dbReference type="PANTHER" id="PTHR42918">
    <property type="entry name" value="LYSYL-TRNA SYNTHETASE"/>
    <property type="match status" value="1"/>
</dbReference>
<dbReference type="Pfam" id="PF00152">
    <property type="entry name" value="tRNA-synt_2"/>
    <property type="match status" value="1"/>
</dbReference>
<dbReference type="PRINTS" id="PR00982">
    <property type="entry name" value="TRNASYNTHLYS"/>
</dbReference>
<dbReference type="SUPFAM" id="SSF55681">
    <property type="entry name" value="Class II aaRS and biotin synthetases"/>
    <property type="match status" value="1"/>
</dbReference>
<dbReference type="PROSITE" id="PS50862">
    <property type="entry name" value="AA_TRNA_LIGASE_II"/>
    <property type="match status" value="1"/>
</dbReference>
<organism>
    <name type="scientific">Escherichia coli O6:K15:H31 (strain 536 / UPEC)</name>
    <dbReference type="NCBI Taxonomy" id="362663"/>
    <lineage>
        <taxon>Bacteria</taxon>
        <taxon>Pseudomonadati</taxon>
        <taxon>Pseudomonadota</taxon>
        <taxon>Gammaproteobacteria</taxon>
        <taxon>Enterobacterales</taxon>
        <taxon>Enterobacteriaceae</taxon>
        <taxon>Escherichia</taxon>
    </lineage>
</organism>
<gene>
    <name evidence="1" type="primary">epmA</name>
    <name type="synonym">yjeA</name>
    <name type="ordered locus">ECP_4401</name>
</gene>
<accession>Q0T9N4</accession>
<sequence length="325" mass="36976">MSETASWQPSASIPNLLKRAAIMAEIRRFFADRGVLEVETPCMSQATVTDIHLVPFETRFVGPGHSQGMNLWLMTSPEYHMKRLLVAGCGPVFQLCRSFRNEEMGRYHNPEFTMLEWYRPHYDMYRLMNEVDDLLQQVLDCPAAESLSYQQAFLRYLEIDPLSADKTQLREVAAKLDLSNVADTEEDRDTLLQLLFTFGVEPNIGKEKPTFVYHFPASQASLAQISTEDHRVAERFEVYYKGIELANGFHELTDAREQQQRFEQDNRKRAARGLPQHPIDQNLIEALKVGMPDCSGVALGVDRLVMLALGAETLAEVIAFSVDRA</sequence>
<feature type="chain" id="PRO_1000023620" description="Elongation factor P--(R)-beta-lysine ligase">
    <location>
        <begin position="1"/>
        <end position="325"/>
    </location>
</feature>
<feature type="binding site" evidence="1">
    <location>
        <begin position="76"/>
        <end position="78"/>
    </location>
    <ligand>
        <name>substrate</name>
    </ligand>
</feature>
<feature type="binding site" evidence="1">
    <location>
        <begin position="100"/>
        <end position="102"/>
    </location>
    <ligand>
        <name>ATP</name>
        <dbReference type="ChEBI" id="CHEBI:30616"/>
    </ligand>
</feature>
<feature type="binding site" evidence="1">
    <location>
        <position position="109"/>
    </location>
    <ligand>
        <name>ATP</name>
        <dbReference type="ChEBI" id="CHEBI:30616"/>
    </ligand>
</feature>
<feature type="binding site" evidence="1">
    <location>
        <position position="118"/>
    </location>
    <ligand>
        <name>substrate</name>
    </ligand>
</feature>
<feature type="binding site" evidence="1">
    <location>
        <begin position="244"/>
        <end position="245"/>
    </location>
    <ligand>
        <name>ATP</name>
        <dbReference type="ChEBI" id="CHEBI:30616"/>
    </ligand>
</feature>
<feature type="binding site" evidence="1">
    <location>
        <position position="251"/>
    </location>
    <ligand>
        <name>substrate</name>
    </ligand>
</feature>
<feature type="binding site" evidence="1">
    <location>
        <position position="300"/>
    </location>
    <ligand>
        <name>ATP</name>
        <dbReference type="ChEBI" id="CHEBI:30616"/>
    </ligand>
</feature>
<comment type="function">
    <text evidence="1">With EpmB is involved in the beta-lysylation step of the post-translational modification of translation elongation factor P (EF-P) on 'Lys-34'. Catalyzes the ATP-dependent activation of (R)-beta-lysine produced by EpmB, forming a lysyl-adenylate, from which the beta-lysyl moiety is then transferred to the epsilon-amino group of EF-P 'Lys-34'.</text>
</comment>
<comment type="catalytic activity">
    <reaction evidence="1">
        <text>D-beta-lysine + L-lysyl-[protein] + ATP = N(6)-((3R)-3,6-diaminohexanoyl)-L-lysyl-[protein] + AMP + diphosphate + H(+)</text>
        <dbReference type="Rhea" id="RHEA:83435"/>
        <dbReference type="Rhea" id="RHEA-COMP:9752"/>
        <dbReference type="Rhea" id="RHEA-COMP:20131"/>
        <dbReference type="ChEBI" id="CHEBI:15378"/>
        <dbReference type="ChEBI" id="CHEBI:29969"/>
        <dbReference type="ChEBI" id="CHEBI:30616"/>
        <dbReference type="ChEBI" id="CHEBI:33019"/>
        <dbReference type="ChEBI" id="CHEBI:84138"/>
        <dbReference type="ChEBI" id="CHEBI:156053"/>
        <dbReference type="ChEBI" id="CHEBI:456215"/>
    </reaction>
    <physiologicalReaction direction="left-to-right" evidence="1">
        <dbReference type="Rhea" id="RHEA:83436"/>
    </physiologicalReaction>
</comment>
<comment type="subunit">
    <text evidence="1">Homodimer.</text>
</comment>
<comment type="similarity">
    <text evidence="1">Belongs to the class-II aminoacyl-tRNA synthetase family. EpmA subfamily.</text>
</comment>
<proteinExistence type="inferred from homology"/>
<evidence type="ECO:0000255" key="1">
    <source>
        <dbReference type="HAMAP-Rule" id="MF_00174"/>
    </source>
</evidence>